<organism>
    <name type="scientific">Photobacterium profundum (strain SS9)</name>
    <dbReference type="NCBI Taxonomy" id="298386"/>
    <lineage>
        <taxon>Bacteria</taxon>
        <taxon>Pseudomonadati</taxon>
        <taxon>Pseudomonadota</taxon>
        <taxon>Gammaproteobacteria</taxon>
        <taxon>Vibrionales</taxon>
        <taxon>Vibrionaceae</taxon>
        <taxon>Photobacterium</taxon>
    </lineage>
</organism>
<proteinExistence type="inferred from homology"/>
<accession>Q6LM69</accession>
<dbReference type="EC" id="2.7.7.4" evidence="2"/>
<dbReference type="EMBL" id="CR378673">
    <property type="protein sequence ID" value="CAG21608.1"/>
    <property type="molecule type" value="Genomic_DNA"/>
</dbReference>
<dbReference type="RefSeq" id="WP_011219857.1">
    <property type="nucleotide sequence ID" value="NC_006370.1"/>
</dbReference>
<dbReference type="SMR" id="Q6LM69"/>
<dbReference type="STRING" id="298386.PBPRA3310"/>
<dbReference type="KEGG" id="ppr:PBPRA3310"/>
<dbReference type="eggNOG" id="COG2895">
    <property type="taxonomic scope" value="Bacteria"/>
</dbReference>
<dbReference type="HOGENOM" id="CLU_007265_5_2_6"/>
<dbReference type="UniPathway" id="UPA00140">
    <property type="reaction ID" value="UER00204"/>
</dbReference>
<dbReference type="Proteomes" id="UP000000593">
    <property type="component" value="Chromosome 1"/>
</dbReference>
<dbReference type="GO" id="GO:0005524">
    <property type="term" value="F:ATP binding"/>
    <property type="evidence" value="ECO:0007669"/>
    <property type="project" value="UniProtKB-KW"/>
</dbReference>
<dbReference type="GO" id="GO:0005525">
    <property type="term" value="F:GTP binding"/>
    <property type="evidence" value="ECO:0007669"/>
    <property type="project" value="UniProtKB-UniRule"/>
</dbReference>
<dbReference type="GO" id="GO:0003924">
    <property type="term" value="F:GTPase activity"/>
    <property type="evidence" value="ECO:0007669"/>
    <property type="project" value="InterPro"/>
</dbReference>
<dbReference type="GO" id="GO:0097216">
    <property type="term" value="F:guanosine tetraphosphate binding"/>
    <property type="evidence" value="ECO:0007669"/>
    <property type="project" value="UniProtKB-ARBA"/>
</dbReference>
<dbReference type="GO" id="GO:0004781">
    <property type="term" value="F:sulfate adenylyltransferase (ATP) activity"/>
    <property type="evidence" value="ECO:0007669"/>
    <property type="project" value="UniProtKB-UniRule"/>
</dbReference>
<dbReference type="GO" id="GO:0070814">
    <property type="term" value="P:hydrogen sulfide biosynthetic process"/>
    <property type="evidence" value="ECO:0007669"/>
    <property type="project" value="UniProtKB-UniRule"/>
</dbReference>
<dbReference type="GO" id="GO:0000103">
    <property type="term" value="P:sulfate assimilation"/>
    <property type="evidence" value="ECO:0007669"/>
    <property type="project" value="UniProtKB-UniRule"/>
</dbReference>
<dbReference type="CDD" id="cd04166">
    <property type="entry name" value="CysN_ATPS"/>
    <property type="match status" value="1"/>
</dbReference>
<dbReference type="CDD" id="cd03695">
    <property type="entry name" value="CysN_NodQ_II"/>
    <property type="match status" value="1"/>
</dbReference>
<dbReference type="CDD" id="cd04095">
    <property type="entry name" value="CysN_NoDQ_III"/>
    <property type="match status" value="1"/>
</dbReference>
<dbReference type="FunFam" id="2.40.30.10:FF:000027">
    <property type="entry name" value="Sulfate adenylyltransferase subunit 1"/>
    <property type="match status" value="1"/>
</dbReference>
<dbReference type="FunFam" id="2.40.30.10:FF:000031">
    <property type="entry name" value="Sulfate adenylyltransferase subunit 1"/>
    <property type="match status" value="1"/>
</dbReference>
<dbReference type="FunFam" id="3.40.50.300:FF:000119">
    <property type="entry name" value="Sulfate adenylyltransferase subunit 1"/>
    <property type="match status" value="1"/>
</dbReference>
<dbReference type="Gene3D" id="3.40.50.300">
    <property type="entry name" value="P-loop containing nucleotide triphosphate hydrolases"/>
    <property type="match status" value="1"/>
</dbReference>
<dbReference type="Gene3D" id="2.40.30.10">
    <property type="entry name" value="Translation factors"/>
    <property type="match status" value="2"/>
</dbReference>
<dbReference type="HAMAP" id="MF_00062">
    <property type="entry name" value="Sulf_adenylyltr_sub1"/>
    <property type="match status" value="1"/>
</dbReference>
<dbReference type="InterPro" id="IPR041757">
    <property type="entry name" value="CysN_GTP-bd"/>
</dbReference>
<dbReference type="InterPro" id="IPR044138">
    <property type="entry name" value="CysN_II"/>
</dbReference>
<dbReference type="InterPro" id="IPR044139">
    <property type="entry name" value="CysN_NoDQ_III"/>
</dbReference>
<dbReference type="InterPro" id="IPR004161">
    <property type="entry name" value="EFTu-like_2"/>
</dbReference>
<dbReference type="InterPro" id="IPR031157">
    <property type="entry name" value="G_TR_CS"/>
</dbReference>
<dbReference type="InterPro" id="IPR054696">
    <property type="entry name" value="GTP-eEF1A_C"/>
</dbReference>
<dbReference type="InterPro" id="IPR027417">
    <property type="entry name" value="P-loop_NTPase"/>
</dbReference>
<dbReference type="InterPro" id="IPR005225">
    <property type="entry name" value="Small_GTP-bd"/>
</dbReference>
<dbReference type="InterPro" id="IPR011779">
    <property type="entry name" value="SO4_adenylTrfase_lsu"/>
</dbReference>
<dbReference type="InterPro" id="IPR000795">
    <property type="entry name" value="T_Tr_GTP-bd_dom"/>
</dbReference>
<dbReference type="InterPro" id="IPR050100">
    <property type="entry name" value="TRAFAC_GTPase_members"/>
</dbReference>
<dbReference type="InterPro" id="IPR009000">
    <property type="entry name" value="Transl_B-barrel_sf"/>
</dbReference>
<dbReference type="InterPro" id="IPR009001">
    <property type="entry name" value="Transl_elong_EF1A/Init_IF2_C"/>
</dbReference>
<dbReference type="NCBIfam" id="TIGR02034">
    <property type="entry name" value="CysN"/>
    <property type="match status" value="1"/>
</dbReference>
<dbReference type="NCBIfam" id="NF003478">
    <property type="entry name" value="PRK05124.1"/>
    <property type="match status" value="1"/>
</dbReference>
<dbReference type="NCBIfam" id="TIGR00231">
    <property type="entry name" value="small_GTP"/>
    <property type="match status" value="1"/>
</dbReference>
<dbReference type="PANTHER" id="PTHR23115">
    <property type="entry name" value="TRANSLATION FACTOR"/>
    <property type="match status" value="1"/>
</dbReference>
<dbReference type="Pfam" id="PF22594">
    <property type="entry name" value="GTP-eEF1A_C"/>
    <property type="match status" value="1"/>
</dbReference>
<dbReference type="Pfam" id="PF00009">
    <property type="entry name" value="GTP_EFTU"/>
    <property type="match status" value="1"/>
</dbReference>
<dbReference type="Pfam" id="PF03144">
    <property type="entry name" value="GTP_EFTU_D2"/>
    <property type="match status" value="1"/>
</dbReference>
<dbReference type="PRINTS" id="PR00315">
    <property type="entry name" value="ELONGATNFCT"/>
</dbReference>
<dbReference type="SUPFAM" id="SSF50465">
    <property type="entry name" value="EF-Tu/eEF-1alpha/eIF2-gamma C-terminal domain"/>
    <property type="match status" value="1"/>
</dbReference>
<dbReference type="SUPFAM" id="SSF52540">
    <property type="entry name" value="P-loop containing nucleoside triphosphate hydrolases"/>
    <property type="match status" value="1"/>
</dbReference>
<dbReference type="SUPFAM" id="SSF50447">
    <property type="entry name" value="Translation proteins"/>
    <property type="match status" value="1"/>
</dbReference>
<dbReference type="PROSITE" id="PS00301">
    <property type="entry name" value="G_TR_1"/>
    <property type="match status" value="1"/>
</dbReference>
<dbReference type="PROSITE" id="PS51722">
    <property type="entry name" value="G_TR_2"/>
    <property type="match status" value="1"/>
</dbReference>
<reference key="1">
    <citation type="journal article" date="2005" name="Science">
        <title>Life at depth: Photobacterium profundum genome sequence and expression analysis.</title>
        <authorList>
            <person name="Vezzi A."/>
            <person name="Campanaro S."/>
            <person name="D'Angelo M."/>
            <person name="Simonato F."/>
            <person name="Vitulo N."/>
            <person name="Lauro F.M."/>
            <person name="Cestaro A."/>
            <person name="Malacrida G."/>
            <person name="Simionati B."/>
            <person name="Cannata N."/>
            <person name="Romualdi C."/>
            <person name="Bartlett D.H."/>
            <person name="Valle G."/>
        </authorList>
    </citation>
    <scope>NUCLEOTIDE SEQUENCE [LARGE SCALE GENOMIC DNA]</scope>
    <source>
        <strain>ATCC BAA-1253 / SS9</strain>
    </source>
</reference>
<name>CYSN_PHOPR</name>
<feature type="chain" id="PRO_1000092148" description="Sulfate adenylyltransferase subunit 1">
    <location>
        <begin position="1"/>
        <end position="476"/>
    </location>
</feature>
<feature type="domain" description="tr-type G">
    <location>
        <begin position="24"/>
        <end position="241"/>
    </location>
</feature>
<feature type="region of interest" description="G1" evidence="1">
    <location>
        <begin position="33"/>
        <end position="40"/>
    </location>
</feature>
<feature type="region of interest" description="G2" evidence="1">
    <location>
        <begin position="91"/>
        <end position="95"/>
    </location>
</feature>
<feature type="region of interest" description="G3" evidence="1">
    <location>
        <begin position="112"/>
        <end position="115"/>
    </location>
</feature>
<feature type="region of interest" description="G4" evidence="1">
    <location>
        <begin position="167"/>
        <end position="170"/>
    </location>
</feature>
<feature type="region of interest" description="G5" evidence="1">
    <location>
        <begin position="205"/>
        <end position="207"/>
    </location>
</feature>
<feature type="binding site" evidence="2">
    <location>
        <begin position="33"/>
        <end position="40"/>
    </location>
    <ligand>
        <name>GTP</name>
        <dbReference type="ChEBI" id="CHEBI:37565"/>
    </ligand>
</feature>
<feature type="binding site" evidence="2">
    <location>
        <begin position="112"/>
        <end position="116"/>
    </location>
    <ligand>
        <name>GTP</name>
        <dbReference type="ChEBI" id="CHEBI:37565"/>
    </ligand>
</feature>
<feature type="binding site" evidence="2">
    <location>
        <begin position="167"/>
        <end position="170"/>
    </location>
    <ligand>
        <name>GTP</name>
        <dbReference type="ChEBI" id="CHEBI:37565"/>
    </ligand>
</feature>
<gene>
    <name evidence="2" type="primary">cysN</name>
    <name type="ordered locus">PBPRA3310</name>
</gene>
<comment type="function">
    <text evidence="2">With CysD forms the ATP sulfurylase (ATPS) that catalyzes the adenylation of sulfate producing adenosine 5'-phosphosulfate (APS) and diphosphate, the first enzymatic step in sulfur assimilation pathway. APS synthesis involves the formation of a high-energy phosphoric-sulfuric acid anhydride bond driven by GTP hydrolysis by CysN coupled to ATP hydrolysis by CysD.</text>
</comment>
<comment type="catalytic activity">
    <reaction evidence="2">
        <text>sulfate + ATP + H(+) = adenosine 5'-phosphosulfate + diphosphate</text>
        <dbReference type="Rhea" id="RHEA:18133"/>
        <dbReference type="ChEBI" id="CHEBI:15378"/>
        <dbReference type="ChEBI" id="CHEBI:16189"/>
        <dbReference type="ChEBI" id="CHEBI:30616"/>
        <dbReference type="ChEBI" id="CHEBI:33019"/>
        <dbReference type="ChEBI" id="CHEBI:58243"/>
        <dbReference type="EC" id="2.7.7.4"/>
    </reaction>
</comment>
<comment type="pathway">
    <text evidence="2">Sulfur metabolism; hydrogen sulfide biosynthesis; sulfite from sulfate: step 1/3.</text>
</comment>
<comment type="subunit">
    <text evidence="2">Heterodimer composed of CysD, the smaller subunit, and CysN.</text>
</comment>
<comment type="similarity">
    <text evidence="2">Belongs to the TRAFAC class translation factor GTPase superfamily. Classic translation factor GTPase family. CysN/NodQ subfamily.</text>
</comment>
<protein>
    <recommendedName>
        <fullName evidence="2">Sulfate adenylyltransferase subunit 1</fullName>
        <ecNumber evidence="2">2.7.7.4</ecNumber>
    </recommendedName>
    <alternativeName>
        <fullName evidence="2">ATP-sulfurylase large subunit</fullName>
    </alternativeName>
    <alternativeName>
        <fullName evidence="2">Sulfate adenylate transferase</fullName>
        <shortName evidence="2">SAT</shortName>
    </alternativeName>
</protein>
<keyword id="KW-0067">ATP-binding</keyword>
<keyword id="KW-0342">GTP-binding</keyword>
<keyword id="KW-0547">Nucleotide-binding</keyword>
<keyword id="KW-0548">Nucleotidyltransferase</keyword>
<keyword id="KW-1185">Reference proteome</keyword>
<keyword id="KW-0808">Transferase</keyword>
<sequence length="476" mass="52637">MNSLIEQQVAEIGIEAYLDQHHHKSLLRFLTCGSVDDGKSTLIGRLLHDSHQIYEDQLAAIYTDSQKVGTTGDKPDLALLVDGLQAEREQGITIDVAYRYFSTKKRKFIIADTPGHEQYTRNMATGASTCDVAVILIDARKGVLDQTRRHSYIASLLGIRHFIVAINKMDLVGFDEERFTSIRDEYLEFAEKLNKNIEIKLVPLSALDGDNVVSLSEQTPWYKGDSLLTLLEDVDFVQEQESSDFRFPVQYVNRPNLDFRGFAGTIASGLVKVGDKVKALPSGKMSTIDRIVTFDGDLPEAYSGQAITLTLKDEIDISRGDTIVAADDDVPLSHNLLADIVWMAEAPLEVGRQYDIKVAGKKTVGSVQGIRHQVDINNLETFTTETLPLNGIGLCEVVLNEAIAVDAYQNSIDTGGFIIIDRLTNVTVGAGMVREALIDKTVVSTGDFSAFEIEFNALVRKHFPHWNADDISKLLG</sequence>
<evidence type="ECO:0000250" key="1"/>
<evidence type="ECO:0000255" key="2">
    <source>
        <dbReference type="HAMAP-Rule" id="MF_00062"/>
    </source>
</evidence>